<protein>
    <recommendedName>
        <fullName evidence="1">DNA mismatch repair protein MutS</fullName>
    </recommendedName>
</protein>
<accession>Q636Q7</accession>
<sequence>MTQYTPMIQQYLKVKADYQDAFLFFRLGDFYEMFFEDAVKAAHELEITLTSRDGGSSERIPMCGVPYHAAKNYIEQLVEKGYKVAVCEQVEDPKTAKGVVRREVVQLITPGTMMEGRTIDEKENNFLAALTHFEDGSYALACNDLTTGQNTVTLLTGSVEDILLEVYATGSKEIVVDSSFSKDELNKLTETLKMTISYEDATAIPEGLEHLVKNVSQAKLIKAVGRLFNYVIRTQKRSLDHLQPVEIYYTNQFMKIDVHSKRNLELTETLRTKEKTGSLLWLLDKTKTAMGGRMLKQWMERPLIQKERIEERLEMVETFVNDYFLREDLKEKLKEVYDLERLAGKVAFGNVNARDLLQLRRSLLQVPAILEAISLLDNAYAARLIQGADPCESLTELLGRSIQENPPLSIKDGDIIKDGYNDKLDQYRYVSKNGKTWIAELEKRERDITGIKSLKIGYNRIFGYYIEVTKANLGALPEGRYERKQTLANAERFITDELKEKETLILEAEEKIVQLEYDLFTALREEVKVFIPKLQHLAKVISELDVLQSFATVSEEEQFVKPVLTTKREIFIKDGRHPVVEKVLNGKLYVPNDCIMPEKMDVFLITGPNMSGKSTYMRQLALVTVMSQIGCFVPATEAVLPVFDQIFTRIGAADDLISGQSTFMVEMLEAKNAIANASERSLILFDEIGRGTSTYDGMALAQAIIEHIHDQIGAKTLFSTHYHELTVLEDSLDQLKNVHVSAIEENGKVVFLHKIQDGAADKSYGIHVAQLAELPDSLIARAKEVLAQLEGQEEIIIPKRVEVKAQEQEQEVIPEPIVVKEEPVEIEETKVDNEEESQLSFFGAEHSSKKQDKPVLDAKETAVLSQIKKIDLLDMTPLEAMNELYRLQKKLKKG</sequence>
<dbReference type="EMBL" id="CP000001">
    <property type="protein sequence ID" value="AAU16738.1"/>
    <property type="molecule type" value="Genomic_DNA"/>
</dbReference>
<dbReference type="RefSeq" id="WP_000196004.1">
    <property type="nucleotide sequence ID" value="NC_006274.1"/>
</dbReference>
<dbReference type="SMR" id="Q636Q7"/>
<dbReference type="KEGG" id="bcz:BCE33L3528"/>
<dbReference type="PATRIC" id="fig|288681.22.peg.1882"/>
<dbReference type="Proteomes" id="UP000002612">
    <property type="component" value="Chromosome"/>
</dbReference>
<dbReference type="GO" id="GO:0005829">
    <property type="term" value="C:cytosol"/>
    <property type="evidence" value="ECO:0007669"/>
    <property type="project" value="TreeGrafter"/>
</dbReference>
<dbReference type="GO" id="GO:0005524">
    <property type="term" value="F:ATP binding"/>
    <property type="evidence" value="ECO:0007669"/>
    <property type="project" value="UniProtKB-UniRule"/>
</dbReference>
<dbReference type="GO" id="GO:0140664">
    <property type="term" value="F:ATP-dependent DNA damage sensor activity"/>
    <property type="evidence" value="ECO:0007669"/>
    <property type="project" value="InterPro"/>
</dbReference>
<dbReference type="GO" id="GO:0003684">
    <property type="term" value="F:damaged DNA binding"/>
    <property type="evidence" value="ECO:0007669"/>
    <property type="project" value="UniProtKB-UniRule"/>
</dbReference>
<dbReference type="GO" id="GO:0030983">
    <property type="term" value="F:mismatched DNA binding"/>
    <property type="evidence" value="ECO:0007669"/>
    <property type="project" value="InterPro"/>
</dbReference>
<dbReference type="GO" id="GO:0006298">
    <property type="term" value="P:mismatch repair"/>
    <property type="evidence" value="ECO:0007669"/>
    <property type="project" value="UniProtKB-UniRule"/>
</dbReference>
<dbReference type="CDD" id="cd03284">
    <property type="entry name" value="ABC_MutS1"/>
    <property type="match status" value="1"/>
</dbReference>
<dbReference type="FunFam" id="1.10.1420.10:FF:000007">
    <property type="entry name" value="DNA mismatch repair protein MutS"/>
    <property type="match status" value="1"/>
</dbReference>
<dbReference type="FunFam" id="3.30.420.110:FF:000007">
    <property type="entry name" value="DNA mismatch repair protein MutS"/>
    <property type="match status" value="1"/>
</dbReference>
<dbReference type="FunFam" id="3.40.1170.10:FF:000001">
    <property type="entry name" value="DNA mismatch repair protein MutS"/>
    <property type="match status" value="1"/>
</dbReference>
<dbReference type="FunFam" id="3.40.50.300:FF:000896">
    <property type="entry name" value="DNA mismatch repair protein MutS"/>
    <property type="match status" value="1"/>
</dbReference>
<dbReference type="Gene3D" id="1.10.1420.10">
    <property type="match status" value="2"/>
</dbReference>
<dbReference type="Gene3D" id="3.40.1170.10">
    <property type="entry name" value="DNA repair protein MutS, domain I"/>
    <property type="match status" value="1"/>
</dbReference>
<dbReference type="Gene3D" id="3.30.420.110">
    <property type="entry name" value="MutS, connector domain"/>
    <property type="match status" value="1"/>
</dbReference>
<dbReference type="Gene3D" id="3.40.50.300">
    <property type="entry name" value="P-loop containing nucleotide triphosphate hydrolases"/>
    <property type="match status" value="1"/>
</dbReference>
<dbReference type="HAMAP" id="MF_00096">
    <property type="entry name" value="MutS"/>
    <property type="match status" value="1"/>
</dbReference>
<dbReference type="InterPro" id="IPR005748">
    <property type="entry name" value="DNA_mismatch_repair_MutS"/>
</dbReference>
<dbReference type="InterPro" id="IPR007695">
    <property type="entry name" value="DNA_mismatch_repair_MutS-lik_N"/>
</dbReference>
<dbReference type="InterPro" id="IPR017261">
    <property type="entry name" value="DNA_mismatch_repair_MutS/MSH"/>
</dbReference>
<dbReference type="InterPro" id="IPR000432">
    <property type="entry name" value="DNA_mismatch_repair_MutS_C"/>
</dbReference>
<dbReference type="InterPro" id="IPR007861">
    <property type="entry name" value="DNA_mismatch_repair_MutS_clamp"/>
</dbReference>
<dbReference type="InterPro" id="IPR007696">
    <property type="entry name" value="DNA_mismatch_repair_MutS_core"/>
</dbReference>
<dbReference type="InterPro" id="IPR016151">
    <property type="entry name" value="DNA_mismatch_repair_MutS_N"/>
</dbReference>
<dbReference type="InterPro" id="IPR036187">
    <property type="entry name" value="DNA_mismatch_repair_MutS_sf"/>
</dbReference>
<dbReference type="InterPro" id="IPR007860">
    <property type="entry name" value="DNA_mmatch_repair_MutS_con_dom"/>
</dbReference>
<dbReference type="InterPro" id="IPR045076">
    <property type="entry name" value="MutS"/>
</dbReference>
<dbReference type="InterPro" id="IPR036678">
    <property type="entry name" value="MutS_con_dom_sf"/>
</dbReference>
<dbReference type="InterPro" id="IPR027417">
    <property type="entry name" value="P-loop_NTPase"/>
</dbReference>
<dbReference type="NCBIfam" id="TIGR01070">
    <property type="entry name" value="mutS1"/>
    <property type="match status" value="1"/>
</dbReference>
<dbReference type="NCBIfam" id="NF003810">
    <property type="entry name" value="PRK05399.1"/>
    <property type="match status" value="1"/>
</dbReference>
<dbReference type="PANTHER" id="PTHR11361:SF34">
    <property type="entry name" value="DNA MISMATCH REPAIR PROTEIN MSH1, MITOCHONDRIAL"/>
    <property type="match status" value="1"/>
</dbReference>
<dbReference type="PANTHER" id="PTHR11361">
    <property type="entry name" value="DNA MISMATCH REPAIR PROTEIN MUTS FAMILY MEMBER"/>
    <property type="match status" value="1"/>
</dbReference>
<dbReference type="Pfam" id="PF01624">
    <property type="entry name" value="MutS_I"/>
    <property type="match status" value="1"/>
</dbReference>
<dbReference type="Pfam" id="PF05188">
    <property type="entry name" value="MutS_II"/>
    <property type="match status" value="1"/>
</dbReference>
<dbReference type="Pfam" id="PF05192">
    <property type="entry name" value="MutS_III"/>
    <property type="match status" value="1"/>
</dbReference>
<dbReference type="Pfam" id="PF05190">
    <property type="entry name" value="MutS_IV"/>
    <property type="match status" value="1"/>
</dbReference>
<dbReference type="Pfam" id="PF00488">
    <property type="entry name" value="MutS_V"/>
    <property type="match status" value="1"/>
</dbReference>
<dbReference type="PIRSF" id="PIRSF037677">
    <property type="entry name" value="DNA_mis_repair_Msh6"/>
    <property type="match status" value="1"/>
</dbReference>
<dbReference type="SMART" id="SM00534">
    <property type="entry name" value="MUTSac"/>
    <property type="match status" value="1"/>
</dbReference>
<dbReference type="SMART" id="SM00533">
    <property type="entry name" value="MUTSd"/>
    <property type="match status" value="1"/>
</dbReference>
<dbReference type="SUPFAM" id="SSF55271">
    <property type="entry name" value="DNA repair protein MutS, domain I"/>
    <property type="match status" value="1"/>
</dbReference>
<dbReference type="SUPFAM" id="SSF53150">
    <property type="entry name" value="DNA repair protein MutS, domain II"/>
    <property type="match status" value="1"/>
</dbReference>
<dbReference type="SUPFAM" id="SSF48334">
    <property type="entry name" value="DNA repair protein MutS, domain III"/>
    <property type="match status" value="1"/>
</dbReference>
<dbReference type="SUPFAM" id="SSF52540">
    <property type="entry name" value="P-loop containing nucleoside triphosphate hydrolases"/>
    <property type="match status" value="1"/>
</dbReference>
<dbReference type="PROSITE" id="PS00486">
    <property type="entry name" value="DNA_MISMATCH_REPAIR_2"/>
    <property type="match status" value="1"/>
</dbReference>
<name>MUTS_BACCZ</name>
<feature type="chain" id="PRO_0000224345" description="DNA mismatch repair protein MutS">
    <location>
        <begin position="1"/>
        <end position="894"/>
    </location>
</feature>
<feature type="binding site" evidence="1">
    <location>
        <begin position="607"/>
        <end position="614"/>
    </location>
    <ligand>
        <name>ATP</name>
        <dbReference type="ChEBI" id="CHEBI:30616"/>
    </ligand>
</feature>
<organism>
    <name type="scientific">Bacillus cereus (strain ZK / E33L)</name>
    <dbReference type="NCBI Taxonomy" id="288681"/>
    <lineage>
        <taxon>Bacteria</taxon>
        <taxon>Bacillati</taxon>
        <taxon>Bacillota</taxon>
        <taxon>Bacilli</taxon>
        <taxon>Bacillales</taxon>
        <taxon>Bacillaceae</taxon>
        <taxon>Bacillus</taxon>
        <taxon>Bacillus cereus group</taxon>
    </lineage>
</organism>
<evidence type="ECO:0000255" key="1">
    <source>
        <dbReference type="HAMAP-Rule" id="MF_00096"/>
    </source>
</evidence>
<gene>
    <name evidence="1" type="primary">mutS</name>
    <name type="ordered locus">BCE33L3528</name>
</gene>
<keyword id="KW-0067">ATP-binding</keyword>
<keyword id="KW-0227">DNA damage</keyword>
<keyword id="KW-0234">DNA repair</keyword>
<keyword id="KW-0238">DNA-binding</keyword>
<keyword id="KW-0547">Nucleotide-binding</keyword>
<proteinExistence type="inferred from homology"/>
<reference key="1">
    <citation type="journal article" date="2006" name="J. Bacteriol.">
        <title>Pathogenomic sequence analysis of Bacillus cereus and Bacillus thuringiensis isolates closely related to Bacillus anthracis.</title>
        <authorList>
            <person name="Han C.S."/>
            <person name="Xie G."/>
            <person name="Challacombe J.F."/>
            <person name="Altherr M.R."/>
            <person name="Bhotika S.S."/>
            <person name="Bruce D."/>
            <person name="Campbell C.S."/>
            <person name="Campbell M.L."/>
            <person name="Chen J."/>
            <person name="Chertkov O."/>
            <person name="Cleland C."/>
            <person name="Dimitrijevic M."/>
            <person name="Doggett N.A."/>
            <person name="Fawcett J.J."/>
            <person name="Glavina T."/>
            <person name="Goodwin L.A."/>
            <person name="Hill K.K."/>
            <person name="Hitchcock P."/>
            <person name="Jackson P.J."/>
            <person name="Keim P."/>
            <person name="Kewalramani A.R."/>
            <person name="Longmire J."/>
            <person name="Lucas S."/>
            <person name="Malfatti S."/>
            <person name="McMurry K."/>
            <person name="Meincke L.J."/>
            <person name="Misra M."/>
            <person name="Moseman B.L."/>
            <person name="Mundt M."/>
            <person name="Munk A.C."/>
            <person name="Okinaka R.T."/>
            <person name="Parson-Quintana B."/>
            <person name="Reilly L.P."/>
            <person name="Richardson P."/>
            <person name="Robinson D.L."/>
            <person name="Rubin E."/>
            <person name="Saunders E."/>
            <person name="Tapia R."/>
            <person name="Tesmer J.G."/>
            <person name="Thayer N."/>
            <person name="Thompson L.S."/>
            <person name="Tice H."/>
            <person name="Ticknor L.O."/>
            <person name="Wills P.L."/>
            <person name="Brettin T.S."/>
            <person name="Gilna P."/>
        </authorList>
    </citation>
    <scope>NUCLEOTIDE SEQUENCE [LARGE SCALE GENOMIC DNA]</scope>
    <source>
        <strain>ZK / E33L</strain>
    </source>
</reference>
<comment type="function">
    <text evidence="1">This protein is involved in the repair of mismatches in DNA. It is possible that it carries out the mismatch recognition step. This protein has a weak ATPase activity.</text>
</comment>
<comment type="similarity">
    <text evidence="1">Belongs to the DNA mismatch repair MutS family.</text>
</comment>